<feature type="chain" id="PRO_0000049397" description="Zinc fingers and homeoboxes protein 3">
    <location>
        <begin position="1"/>
        <end position="951"/>
    </location>
</feature>
<feature type="zinc finger region" description="C2H2-type 1" evidence="3">
    <location>
        <begin position="77"/>
        <end position="100"/>
    </location>
</feature>
<feature type="zinc finger region" description="C2H2-type 2" evidence="3">
    <location>
        <begin position="109"/>
        <end position="132"/>
    </location>
</feature>
<feature type="DNA-binding region" description="Homeobox 1" evidence="4">
    <location>
        <begin position="298"/>
        <end position="357"/>
    </location>
</feature>
<feature type="DNA-binding region" description="Homeobox 2" evidence="4">
    <location>
        <begin position="487"/>
        <end position="546"/>
    </location>
</feature>
<feature type="DNA-binding region" description="Homeobox 3" evidence="4">
    <location>
        <begin position="605"/>
        <end position="664"/>
    </location>
</feature>
<feature type="DNA-binding region" description="Homeobox 4" evidence="4">
    <location>
        <begin position="759"/>
        <end position="818"/>
    </location>
</feature>
<feature type="DNA-binding region" description="Homeobox 5" evidence="4">
    <location>
        <begin position="830"/>
        <end position="889"/>
    </location>
</feature>
<feature type="region of interest" description="Disordered" evidence="5">
    <location>
        <begin position="1"/>
        <end position="66"/>
    </location>
</feature>
<feature type="region of interest" description="Disordered" evidence="5">
    <location>
        <begin position="198"/>
        <end position="249"/>
    </location>
</feature>
<feature type="region of interest" description="Required for homodimerization and interaction with NFYA" evidence="2">
    <location>
        <begin position="237"/>
        <end position="481"/>
    </location>
</feature>
<feature type="region of interest" description="Required for repressor activity" evidence="2">
    <location>
        <begin position="297"/>
        <end position="495"/>
    </location>
</feature>
<feature type="region of interest" description="Required for nuclear localization" evidence="2">
    <location>
        <begin position="490"/>
        <end position="548"/>
    </location>
</feature>
<feature type="region of interest" description="Disordered" evidence="5">
    <location>
        <begin position="621"/>
        <end position="642"/>
    </location>
</feature>
<feature type="region of interest" description="Disordered" evidence="5">
    <location>
        <begin position="661"/>
        <end position="702"/>
    </location>
</feature>
<feature type="region of interest" description="Disordered" evidence="5">
    <location>
        <begin position="885"/>
        <end position="951"/>
    </location>
</feature>
<feature type="compositionally biased region" description="Low complexity" evidence="5">
    <location>
        <begin position="42"/>
        <end position="58"/>
    </location>
</feature>
<feature type="compositionally biased region" description="Polar residues" evidence="5">
    <location>
        <begin position="232"/>
        <end position="244"/>
    </location>
</feature>
<feature type="compositionally biased region" description="Basic and acidic residues" evidence="5">
    <location>
        <begin position="661"/>
        <end position="674"/>
    </location>
</feature>
<feature type="compositionally biased region" description="Acidic residues" evidence="5">
    <location>
        <begin position="675"/>
        <end position="690"/>
    </location>
</feature>
<feature type="compositionally biased region" description="Polar residues" evidence="5">
    <location>
        <begin position="937"/>
        <end position="951"/>
    </location>
</feature>
<feature type="modified residue" description="Phosphoserine" evidence="2">
    <location>
        <position position="597"/>
    </location>
</feature>
<feature type="modified residue" description="Phosphoserine" evidence="1">
    <location>
        <position position="701"/>
    </location>
</feature>
<feature type="modified residue" description="Phosphoserine" evidence="2">
    <location>
        <position position="716"/>
    </location>
</feature>
<feature type="modified residue" description="Phosphoserine" evidence="2">
    <location>
        <position position="922"/>
    </location>
</feature>
<feature type="modified residue" description="Phosphoserine" evidence="2">
    <location>
        <position position="941"/>
    </location>
</feature>
<comment type="function">
    <text evidence="6">Acts as a transcriptional repressor. Involved in the early stages of mesenchymal stem cell (MSC) osteogenic differentiation. Is a regulator of podocyte gene expression during primary glomerula disease. Binds to promoter DNA.</text>
</comment>
<comment type="subunit">
    <text evidence="2">Homodimer (via homeobox domain 1). Heterodimer with ZHX1 (via homeobox domain 1). Heterodimer with ZHX2 (via homeobox domain 1). Heterodimerization with ZHX1 is a prerequisite for repressor activity. Interacts with NFYA.</text>
</comment>
<comment type="subcellular location">
    <subcellularLocation>
        <location evidence="6">Cytoplasm</location>
    </subcellularLocation>
    <subcellularLocation>
        <location evidence="4 6">Nucleus</location>
    </subcellularLocation>
</comment>
<comment type="tissue specificity">
    <text evidence="6">Widely expressed.</text>
</comment>
<comment type="similarity">
    <text evidence="3">Belongs to the ZHX family.</text>
</comment>
<reference evidence="7 8" key="1">
    <citation type="journal article" date="2006" name="J. Biol. Chem.">
        <title>ZHX proteins regulate podocyte gene expression during the development of nephrotic syndrome.</title>
        <authorList>
            <person name="Liu G."/>
            <person name="Clement L.C."/>
            <person name="Kanwar Y.S."/>
            <person name="Avila-Casado C."/>
            <person name="Chugh S.S."/>
        </authorList>
    </citation>
    <scope>NUCLEOTIDE SEQUENCE [MRNA]</scope>
    <scope>FUNCTION</scope>
    <scope>DNA-BINDING</scope>
    <scope>TISSUE SPECIFICITY</scope>
    <scope>SUBCELLULAR LOCATION</scope>
    <source>
        <tissue>Kidney</tissue>
    </source>
</reference>
<reference evidence="7 9" key="2">
    <citation type="journal article" date="2003" name="Biochem. J.">
        <title>Analysis of zinc-fingers and homeoboxes (ZHX)-1-interacting proteins: molecular cloning and characterization of a member of the ZHX family, ZHX3.</title>
        <authorList>
            <person name="Yamada K."/>
            <person name="Kawata H."/>
            <person name="Shou Z."/>
            <person name="Hirano S."/>
            <person name="Mizutani T."/>
            <person name="Yazawa T."/>
            <person name="Sekiguchi T."/>
            <person name="Yoshino M."/>
            <person name="Kajitani T."/>
            <person name="Miyamoto K."/>
        </authorList>
    </citation>
    <scope>NUCLEOTIDE SEQUENCE [MRNA] OF 114-635</scope>
    <source>
        <tissue evidence="9">Ovary</tissue>
    </source>
</reference>
<organism evidence="9">
    <name type="scientific">Rattus norvegicus</name>
    <name type="common">Rat</name>
    <dbReference type="NCBI Taxonomy" id="10116"/>
    <lineage>
        <taxon>Eukaryota</taxon>
        <taxon>Metazoa</taxon>
        <taxon>Chordata</taxon>
        <taxon>Craniata</taxon>
        <taxon>Vertebrata</taxon>
        <taxon>Euteleostomi</taxon>
        <taxon>Mammalia</taxon>
        <taxon>Eutheria</taxon>
        <taxon>Euarchontoglires</taxon>
        <taxon>Glires</taxon>
        <taxon>Rodentia</taxon>
        <taxon>Myomorpha</taxon>
        <taxon>Muroidea</taxon>
        <taxon>Muridae</taxon>
        <taxon>Murinae</taxon>
        <taxon>Rattus</taxon>
    </lineage>
</organism>
<gene>
    <name type="primary">Zhx3</name>
</gene>
<name>ZHX3_RAT</name>
<keyword id="KW-0963">Cytoplasm</keyword>
<keyword id="KW-0221">Differentiation</keyword>
<keyword id="KW-0238">DNA-binding</keyword>
<keyword id="KW-0371">Homeobox</keyword>
<keyword id="KW-0479">Metal-binding</keyword>
<keyword id="KW-0539">Nucleus</keyword>
<keyword id="KW-0597">Phosphoprotein</keyword>
<keyword id="KW-1185">Reference proteome</keyword>
<keyword id="KW-0677">Repeat</keyword>
<keyword id="KW-0678">Repressor</keyword>
<keyword id="KW-0804">Transcription</keyword>
<keyword id="KW-0805">Transcription regulation</keyword>
<keyword id="KW-0862">Zinc</keyword>
<keyword id="KW-0863">Zinc-finger</keyword>
<proteinExistence type="evidence at protein level"/>
<evidence type="ECO:0000250" key="1">
    <source>
        <dbReference type="UniProtKB" id="Q8C0Q2"/>
    </source>
</evidence>
<evidence type="ECO:0000250" key="2">
    <source>
        <dbReference type="UniProtKB" id="Q9H4I2"/>
    </source>
</evidence>
<evidence type="ECO:0000255" key="3"/>
<evidence type="ECO:0000255" key="4">
    <source>
        <dbReference type="PROSITE-ProRule" id="PRU00108"/>
    </source>
</evidence>
<evidence type="ECO:0000256" key="5">
    <source>
        <dbReference type="SAM" id="MobiDB-lite"/>
    </source>
</evidence>
<evidence type="ECO:0000269" key="6">
    <source>
    </source>
</evidence>
<evidence type="ECO:0000305" key="7"/>
<evidence type="ECO:0000312" key="8">
    <source>
        <dbReference type="EMBL" id="AAY41072.1"/>
    </source>
</evidence>
<evidence type="ECO:0000312" key="9">
    <source>
        <dbReference type="EMBL" id="BAC65210.1"/>
    </source>
</evidence>
<accession>Q80Z36</accession>
<accession>Q1I1B1</accession>
<dbReference type="EMBL" id="DQ017884">
    <property type="protein sequence ID" value="AAY41072.1"/>
    <property type="molecule type" value="mRNA"/>
</dbReference>
<dbReference type="EMBL" id="AB081947">
    <property type="protein sequence ID" value="BAC65210.1"/>
    <property type="molecule type" value="mRNA"/>
</dbReference>
<dbReference type="RefSeq" id="NP_001040562.1">
    <property type="nucleotide sequence ID" value="NM_001047097.2"/>
</dbReference>
<dbReference type="RefSeq" id="XP_008760566.1">
    <property type="nucleotide sequence ID" value="XM_008762344.4"/>
</dbReference>
<dbReference type="RefSeq" id="XP_063139928.1">
    <property type="nucleotide sequence ID" value="XM_063283858.1"/>
</dbReference>
<dbReference type="RefSeq" id="XP_063139929.1">
    <property type="nucleotide sequence ID" value="XM_063283859.1"/>
</dbReference>
<dbReference type="RefSeq" id="XP_063139930.1">
    <property type="nucleotide sequence ID" value="XM_063283860.1"/>
</dbReference>
<dbReference type="RefSeq" id="XP_063139931.1">
    <property type="nucleotide sequence ID" value="XM_063283861.1"/>
</dbReference>
<dbReference type="SMR" id="Q80Z36"/>
<dbReference type="FunCoup" id="Q80Z36">
    <property type="interactions" value="465"/>
</dbReference>
<dbReference type="STRING" id="10116.ENSRNOP00000034076"/>
<dbReference type="PhosphoSitePlus" id="Q80Z36"/>
<dbReference type="PaxDb" id="10116-ENSRNOP00000034076"/>
<dbReference type="Ensembl" id="ENSRNOT00000032588.6">
    <property type="protein sequence ID" value="ENSRNOP00000034076.4"/>
    <property type="gene ID" value="ENSRNOG00000027988.6"/>
</dbReference>
<dbReference type="GeneID" id="311604"/>
<dbReference type="KEGG" id="rno:311604"/>
<dbReference type="UCSC" id="RGD:631431">
    <property type="organism name" value="rat"/>
</dbReference>
<dbReference type="AGR" id="RGD:631431"/>
<dbReference type="CTD" id="23051"/>
<dbReference type="RGD" id="631431">
    <property type="gene designation" value="Zhx3"/>
</dbReference>
<dbReference type="eggNOG" id="ENOG502RC6G">
    <property type="taxonomic scope" value="Eukaryota"/>
</dbReference>
<dbReference type="GeneTree" id="ENSGT00950000182893"/>
<dbReference type="HOGENOM" id="CLU_009147_1_0_1"/>
<dbReference type="InParanoid" id="Q80Z36"/>
<dbReference type="OrthoDB" id="9934076at2759"/>
<dbReference type="PhylomeDB" id="Q80Z36"/>
<dbReference type="TreeFam" id="TF333363"/>
<dbReference type="PRO" id="PR:Q80Z36"/>
<dbReference type="Proteomes" id="UP000002494">
    <property type="component" value="Chromosome 3"/>
</dbReference>
<dbReference type="Bgee" id="ENSRNOG00000027988">
    <property type="expression patterns" value="Expressed in testis and 18 other cell types or tissues"/>
</dbReference>
<dbReference type="ExpressionAtlas" id="Q80Z36">
    <property type="expression patterns" value="baseline and differential"/>
</dbReference>
<dbReference type="GO" id="GO:0005737">
    <property type="term" value="C:cytoplasm"/>
    <property type="evidence" value="ECO:0007669"/>
    <property type="project" value="UniProtKB-SubCell"/>
</dbReference>
<dbReference type="GO" id="GO:0005654">
    <property type="term" value="C:nucleoplasm"/>
    <property type="evidence" value="ECO:0007669"/>
    <property type="project" value="Ensembl"/>
</dbReference>
<dbReference type="GO" id="GO:0005634">
    <property type="term" value="C:nucleus"/>
    <property type="evidence" value="ECO:0000314"/>
    <property type="project" value="GO_Central"/>
</dbReference>
<dbReference type="GO" id="GO:0003700">
    <property type="term" value="F:DNA-binding transcription factor activity"/>
    <property type="evidence" value="ECO:0000250"/>
    <property type="project" value="UniProtKB"/>
</dbReference>
<dbReference type="GO" id="GO:0000981">
    <property type="term" value="F:DNA-binding transcription factor activity, RNA polymerase II-specific"/>
    <property type="evidence" value="ECO:0000314"/>
    <property type="project" value="GO_Central"/>
</dbReference>
<dbReference type="GO" id="GO:0001227">
    <property type="term" value="F:DNA-binding transcription repressor activity, RNA polymerase II-specific"/>
    <property type="evidence" value="ECO:0000305"/>
    <property type="project" value="NTNU_SB"/>
</dbReference>
<dbReference type="GO" id="GO:0046982">
    <property type="term" value="F:protein heterodimerization activity"/>
    <property type="evidence" value="ECO:0000250"/>
    <property type="project" value="UniProtKB"/>
</dbReference>
<dbReference type="GO" id="GO:0042803">
    <property type="term" value="F:protein homodimerization activity"/>
    <property type="evidence" value="ECO:0000250"/>
    <property type="project" value="UniProtKB"/>
</dbReference>
<dbReference type="GO" id="GO:0000977">
    <property type="term" value="F:RNA polymerase II transcription regulatory region sequence-specific DNA binding"/>
    <property type="evidence" value="ECO:0000314"/>
    <property type="project" value="NTNU_SB"/>
</dbReference>
<dbReference type="GO" id="GO:0008270">
    <property type="term" value="F:zinc ion binding"/>
    <property type="evidence" value="ECO:0007669"/>
    <property type="project" value="UniProtKB-KW"/>
</dbReference>
<dbReference type="GO" id="GO:0030154">
    <property type="term" value="P:cell differentiation"/>
    <property type="evidence" value="ECO:0007669"/>
    <property type="project" value="UniProtKB-KW"/>
</dbReference>
<dbReference type="GO" id="GO:0045892">
    <property type="term" value="P:negative regulation of DNA-templated transcription"/>
    <property type="evidence" value="ECO:0000250"/>
    <property type="project" value="UniProtKB"/>
</dbReference>
<dbReference type="GO" id="GO:0000122">
    <property type="term" value="P:negative regulation of transcription by RNA polymerase II"/>
    <property type="evidence" value="ECO:0000314"/>
    <property type="project" value="GO_Central"/>
</dbReference>
<dbReference type="GO" id="GO:0045669">
    <property type="term" value="P:positive regulation of osteoblast differentiation"/>
    <property type="evidence" value="ECO:0000250"/>
    <property type="project" value="UniProtKB"/>
</dbReference>
<dbReference type="GO" id="GO:0006357">
    <property type="term" value="P:regulation of transcription by RNA polymerase II"/>
    <property type="evidence" value="ECO:0000318"/>
    <property type="project" value="GO_Central"/>
</dbReference>
<dbReference type="CDD" id="cd00086">
    <property type="entry name" value="homeodomain"/>
    <property type="match status" value="5"/>
</dbReference>
<dbReference type="FunFam" id="1.10.10.60:FF:000194">
    <property type="entry name" value="Zinc fingers and homeoboxes protein 3"/>
    <property type="match status" value="1"/>
</dbReference>
<dbReference type="FunFam" id="1.10.10.60:FF:000208">
    <property type="entry name" value="Zinc fingers and homeoboxes protein 3"/>
    <property type="match status" value="1"/>
</dbReference>
<dbReference type="FunFam" id="1.10.10.60:FF:000212">
    <property type="entry name" value="Zinc fingers and homeoboxes protein 3"/>
    <property type="match status" value="1"/>
</dbReference>
<dbReference type="FunFam" id="3.30.160.60:FF:000864">
    <property type="entry name" value="Zinc fingers and homeoboxes protein 3"/>
    <property type="match status" value="1"/>
</dbReference>
<dbReference type="FunFam" id="1.10.10.60:FF:000062">
    <property type="entry name" value="zinc fingers and homeoboxes protein 3"/>
    <property type="match status" value="1"/>
</dbReference>
<dbReference type="FunFam" id="1.10.10.60:FF:000133">
    <property type="entry name" value="zinc fingers and homeoboxes protein 3"/>
    <property type="match status" value="1"/>
</dbReference>
<dbReference type="Gene3D" id="3.30.160.60">
    <property type="entry name" value="Classic Zinc Finger"/>
    <property type="match status" value="1"/>
</dbReference>
<dbReference type="Gene3D" id="1.10.10.60">
    <property type="entry name" value="Homeodomain-like"/>
    <property type="match status" value="5"/>
</dbReference>
<dbReference type="InterPro" id="IPR001356">
    <property type="entry name" value="HD"/>
</dbReference>
<dbReference type="InterPro" id="IPR009057">
    <property type="entry name" value="Homeodomain-like_sf"/>
</dbReference>
<dbReference type="InterPro" id="IPR024578">
    <property type="entry name" value="Homez_homeobox_dom"/>
</dbReference>
<dbReference type="InterPro" id="IPR041057">
    <property type="entry name" value="ZHX_Znf_C2H2"/>
</dbReference>
<dbReference type="InterPro" id="IPR036236">
    <property type="entry name" value="Znf_C2H2_sf"/>
</dbReference>
<dbReference type="InterPro" id="IPR013087">
    <property type="entry name" value="Znf_C2H2_type"/>
</dbReference>
<dbReference type="PANTHER" id="PTHR15467:SF6">
    <property type="entry name" value="ZINC FINGERS AND HOMEOBOXES PROTEIN 3"/>
    <property type="match status" value="1"/>
</dbReference>
<dbReference type="PANTHER" id="PTHR15467">
    <property type="entry name" value="ZINC-FINGERS AND HOMEOBOXES RELATED"/>
    <property type="match status" value="1"/>
</dbReference>
<dbReference type="Pfam" id="PF00046">
    <property type="entry name" value="Homeodomain"/>
    <property type="match status" value="3"/>
</dbReference>
<dbReference type="Pfam" id="PF11569">
    <property type="entry name" value="Homez"/>
    <property type="match status" value="1"/>
</dbReference>
<dbReference type="Pfam" id="PF18387">
    <property type="entry name" value="zf_C2H2_ZHX"/>
    <property type="match status" value="1"/>
</dbReference>
<dbReference type="SMART" id="SM00389">
    <property type="entry name" value="HOX"/>
    <property type="match status" value="5"/>
</dbReference>
<dbReference type="SMART" id="SM00355">
    <property type="entry name" value="ZnF_C2H2"/>
    <property type="match status" value="2"/>
</dbReference>
<dbReference type="SUPFAM" id="SSF57667">
    <property type="entry name" value="beta-beta-alpha zinc fingers"/>
    <property type="match status" value="1"/>
</dbReference>
<dbReference type="SUPFAM" id="SSF46689">
    <property type="entry name" value="Homeodomain-like"/>
    <property type="match status" value="5"/>
</dbReference>
<dbReference type="PROSITE" id="PS50071">
    <property type="entry name" value="HOMEOBOX_2"/>
    <property type="match status" value="4"/>
</dbReference>
<sequence>MASKRKSTTPCMIPVKTMVLPGASTEAQPVEPLPEGPQQDLPSEAPEASSEAAPNPSSTDGSALANGHRGTLDGYVYSCKECDFRSQDVTHFVGHMTSEHTDFNKDPHFVCTGCSFLAKTPEGLSLHNAKCHSGEASFLWNVTKPDNHVVVEQSVPENASSSVLAGESTEGTEIIITKTPIMKIMKGKAEAKKIHMLKENAPTQPGGEALPKPLAGETEGKEGDHTFINGATPVSQASANSTKPPHTANGPLIGTVPVLPAGIAQFLSLQQPTVHPQHHPHQPLPTSKALPKVMIPLSSIPTYNAAMDSNSFLKNSFHKFPYPTKAELCYLTVVTKYPEEQLKIWFTAQRLKQGISWSPEEIEDARKKMFNTVIQSVPQPTITVLNTPLVASAGNVQHLIQAALPGHAVGQPEGTAGGLLVTQPLMANGLQASSSSLPLTTASVPKPTAAPINTVCSNTTSAVKVVNAAQSLLTACPSITSQAFLDANIYKNKKSHEQLSALKGSFCRNQFPGQSEVEHLTKVTGLSTREVRKWFSDRRYHCRNLKGTRAMVPGEHGSVLIDSVPEVPFPLSSKVPEVPCVPTATSLVSHPATKRQSWHQTPDFTPTKYKERAPEQLRVLESSFAQNPLPPEEELDRLRSETKMTRREIDGWFSERRKRVNAEETKKADGHAPQEEAEGAEEEGRDEELASELRAPGENGSSEMFLSHTLAERKVSPIKINLKNLRVTEASGKSELPGMGMGVCEPEEDGLNKAVEQPPSRVSYKKTAQQRHLLRQLFVQTQWPSNQDYDSIMAQTGLPRPEVVRWFGDSRYALKNGQLKWYEDYKRGNFPPGLLVIAPGNRELLQDYYMTHKMLCEEDLQTLCEKTQMSAQQVKQWFAEKMGEETRAVADTSSEDQGPGHGEPVAVDKVLGDACAALSENSEAWEPSAPEAGSEPFDTSSPQSGRQLETD</sequence>
<protein>
    <recommendedName>
        <fullName>Zinc fingers and homeoboxes protein 3</fullName>
    </recommendedName>
    <alternativeName>
        <fullName>Zinc finger and homeodomain protein 3</fullName>
    </alternativeName>
</protein>